<name>RS14_CHLCH</name>
<protein>
    <recommendedName>
        <fullName evidence="1">Small ribosomal subunit protein uS14</fullName>
    </recommendedName>
    <alternativeName>
        <fullName evidence="2">30S ribosomal protein S14</fullName>
    </alternativeName>
</protein>
<sequence length="89" mass="10146">MAKKSVIARNEKRIKLVAKYAELRAELVKAGDYEALRKLPRDSSATRVRNRCVLTGRGRGVYAKFGLCRHMFRKLSLEGKLPGIRKASW</sequence>
<keyword id="KW-0687">Ribonucleoprotein</keyword>
<keyword id="KW-0689">Ribosomal protein</keyword>
<keyword id="KW-0694">RNA-binding</keyword>
<keyword id="KW-0699">rRNA-binding</keyword>
<evidence type="ECO:0000255" key="1">
    <source>
        <dbReference type="HAMAP-Rule" id="MF_00537"/>
    </source>
</evidence>
<evidence type="ECO:0000305" key="2"/>
<gene>
    <name evidence="1" type="primary">rpsN</name>
    <name type="ordered locus">Cag_1838</name>
</gene>
<reference key="1">
    <citation type="submission" date="2005-08" db="EMBL/GenBank/DDBJ databases">
        <title>Complete sequence of Chlorobium chlorochromatii CaD3.</title>
        <authorList>
            <consortium name="US DOE Joint Genome Institute"/>
            <person name="Copeland A."/>
            <person name="Lucas S."/>
            <person name="Lapidus A."/>
            <person name="Barry K."/>
            <person name="Detter J.C."/>
            <person name="Glavina T."/>
            <person name="Hammon N."/>
            <person name="Israni S."/>
            <person name="Pitluck S."/>
            <person name="Bryant D."/>
            <person name="Schmutz J."/>
            <person name="Larimer F."/>
            <person name="Land M."/>
            <person name="Kyrpides N."/>
            <person name="Ivanova N."/>
            <person name="Richardson P."/>
        </authorList>
    </citation>
    <scope>NUCLEOTIDE SEQUENCE [LARGE SCALE GENOMIC DNA]</scope>
    <source>
        <strain>CaD3</strain>
    </source>
</reference>
<comment type="function">
    <text evidence="1">Binds 16S rRNA, required for the assembly of 30S particles and may also be responsible for determining the conformation of the 16S rRNA at the A site.</text>
</comment>
<comment type="subunit">
    <text evidence="1">Part of the 30S ribosomal subunit. Contacts proteins S3 and S10.</text>
</comment>
<comment type="similarity">
    <text evidence="1">Belongs to the universal ribosomal protein uS14 family.</text>
</comment>
<accession>Q3API6</accession>
<dbReference type="EMBL" id="CP000108">
    <property type="protein sequence ID" value="ABB29089.1"/>
    <property type="molecule type" value="Genomic_DNA"/>
</dbReference>
<dbReference type="SMR" id="Q3API6"/>
<dbReference type="STRING" id="340177.Cag_1838"/>
<dbReference type="KEGG" id="cch:Cag_1838"/>
<dbReference type="eggNOG" id="COG0199">
    <property type="taxonomic scope" value="Bacteria"/>
</dbReference>
<dbReference type="HOGENOM" id="CLU_139869_0_0_10"/>
<dbReference type="OrthoDB" id="9810484at2"/>
<dbReference type="GO" id="GO:0005737">
    <property type="term" value="C:cytoplasm"/>
    <property type="evidence" value="ECO:0007669"/>
    <property type="project" value="UniProtKB-ARBA"/>
</dbReference>
<dbReference type="GO" id="GO:0015935">
    <property type="term" value="C:small ribosomal subunit"/>
    <property type="evidence" value="ECO:0007669"/>
    <property type="project" value="TreeGrafter"/>
</dbReference>
<dbReference type="GO" id="GO:0019843">
    <property type="term" value="F:rRNA binding"/>
    <property type="evidence" value="ECO:0007669"/>
    <property type="project" value="UniProtKB-UniRule"/>
</dbReference>
<dbReference type="GO" id="GO:0003735">
    <property type="term" value="F:structural constituent of ribosome"/>
    <property type="evidence" value="ECO:0007669"/>
    <property type="project" value="InterPro"/>
</dbReference>
<dbReference type="GO" id="GO:0006412">
    <property type="term" value="P:translation"/>
    <property type="evidence" value="ECO:0007669"/>
    <property type="project" value="UniProtKB-UniRule"/>
</dbReference>
<dbReference type="Gene3D" id="4.10.830.10">
    <property type="entry name" value="30s Ribosomal Protein S14, Chain N"/>
    <property type="match status" value="1"/>
</dbReference>
<dbReference type="HAMAP" id="MF_00537">
    <property type="entry name" value="Ribosomal_uS14_1"/>
    <property type="match status" value="1"/>
</dbReference>
<dbReference type="InterPro" id="IPR001209">
    <property type="entry name" value="Ribosomal_uS14"/>
</dbReference>
<dbReference type="InterPro" id="IPR023036">
    <property type="entry name" value="Ribosomal_uS14_bac/plastid"/>
</dbReference>
<dbReference type="InterPro" id="IPR018271">
    <property type="entry name" value="Ribosomal_uS14_CS"/>
</dbReference>
<dbReference type="InterPro" id="IPR043140">
    <property type="entry name" value="Ribosomal_uS14_sf"/>
</dbReference>
<dbReference type="NCBIfam" id="NF006477">
    <property type="entry name" value="PRK08881.1"/>
    <property type="match status" value="1"/>
</dbReference>
<dbReference type="PANTHER" id="PTHR19836">
    <property type="entry name" value="30S RIBOSOMAL PROTEIN S14"/>
    <property type="match status" value="1"/>
</dbReference>
<dbReference type="PANTHER" id="PTHR19836:SF19">
    <property type="entry name" value="SMALL RIBOSOMAL SUBUNIT PROTEIN US14M"/>
    <property type="match status" value="1"/>
</dbReference>
<dbReference type="Pfam" id="PF00253">
    <property type="entry name" value="Ribosomal_S14"/>
    <property type="match status" value="1"/>
</dbReference>
<dbReference type="SUPFAM" id="SSF57716">
    <property type="entry name" value="Glucocorticoid receptor-like (DNA-binding domain)"/>
    <property type="match status" value="1"/>
</dbReference>
<dbReference type="PROSITE" id="PS00527">
    <property type="entry name" value="RIBOSOMAL_S14"/>
    <property type="match status" value="1"/>
</dbReference>
<feature type="chain" id="PRO_1000128350" description="Small ribosomal subunit protein uS14">
    <location>
        <begin position="1"/>
        <end position="89"/>
    </location>
</feature>
<proteinExistence type="inferred from homology"/>
<organism>
    <name type="scientific">Chlorobium chlorochromatii (strain CaD3)</name>
    <dbReference type="NCBI Taxonomy" id="340177"/>
    <lineage>
        <taxon>Bacteria</taxon>
        <taxon>Pseudomonadati</taxon>
        <taxon>Chlorobiota</taxon>
        <taxon>Chlorobiia</taxon>
        <taxon>Chlorobiales</taxon>
        <taxon>Chlorobiaceae</taxon>
        <taxon>Chlorobium/Pelodictyon group</taxon>
        <taxon>Chlorobium</taxon>
    </lineage>
</organism>